<protein>
    <recommendedName>
        <fullName evidence="1">ATP synthase epsilon chain</fullName>
    </recommendedName>
    <alternativeName>
        <fullName evidence="1">ATP synthase F1 sector epsilon subunit</fullName>
    </alternativeName>
    <alternativeName>
        <fullName evidence="1">F-ATPase epsilon subunit</fullName>
    </alternativeName>
</protein>
<reference key="1">
    <citation type="journal article" date="2003" name="Proc. Natl. Acad. Sci. U.S.A.">
        <title>Complete genome sequence and analysis of Wolinella succinogenes.</title>
        <authorList>
            <person name="Baar C."/>
            <person name="Eppinger M."/>
            <person name="Raddatz G."/>
            <person name="Simon J."/>
            <person name="Lanz C."/>
            <person name="Klimmek O."/>
            <person name="Nandakumar R."/>
            <person name="Gross R."/>
            <person name="Rosinus A."/>
            <person name="Keller H."/>
            <person name="Jagtap P."/>
            <person name="Linke B."/>
            <person name="Meyer F."/>
            <person name="Lederer H."/>
            <person name="Schuster S.C."/>
        </authorList>
    </citation>
    <scope>NUCLEOTIDE SEQUENCE [LARGE SCALE GENOMIC DNA]</scope>
    <source>
        <strain>ATCC 29543 / DSM 1740 / CCUG 13145 / JCM 31913 / LMG 7466 / NCTC 11488 / FDC 602W</strain>
    </source>
</reference>
<proteinExistence type="inferred from homology"/>
<sequence>MMELLKLNIVTPQGSIFSGDVKSVTLPGAEGEFGVLPGHADLLSLLNAGAIEFEKSNGKTELVAVNWGQVKVDAVSVDVLADGAIAIGGDSESEVAMAIANARTLLEEATDNNVAISSVVSRIESAAKNSL</sequence>
<accession>Q7MSF4</accession>
<comment type="function">
    <text evidence="1">Produces ATP from ADP in the presence of a proton gradient across the membrane.</text>
</comment>
<comment type="subunit">
    <text>F-type ATPases have 2 components, CF(1) - the catalytic core - and CF(0) - the membrane proton channel. CF(1) has five subunits: alpha(3), beta(3), gamma(1), delta(1), epsilon(1). CF(0) has three main subunits: a, b and c.</text>
</comment>
<comment type="subcellular location">
    <subcellularLocation>
        <location evidence="1">Cell inner membrane</location>
        <topology evidence="1">Peripheral membrane protein</topology>
    </subcellularLocation>
</comment>
<comment type="similarity">
    <text evidence="1">Belongs to the ATPase epsilon chain family.</text>
</comment>
<keyword id="KW-0066">ATP synthesis</keyword>
<keyword id="KW-0997">Cell inner membrane</keyword>
<keyword id="KW-1003">Cell membrane</keyword>
<keyword id="KW-0139">CF(1)</keyword>
<keyword id="KW-0375">Hydrogen ion transport</keyword>
<keyword id="KW-0406">Ion transport</keyword>
<keyword id="KW-0472">Membrane</keyword>
<keyword id="KW-1185">Reference proteome</keyword>
<keyword id="KW-0813">Transport</keyword>
<name>ATPE_WOLSU</name>
<organism>
    <name type="scientific">Wolinella succinogenes (strain ATCC 29543 / DSM 1740 / CCUG 13145 / JCM 31913 / LMG 7466 / NCTC 11488 / FDC 602W)</name>
    <name type="common">Vibrio succinogenes</name>
    <dbReference type="NCBI Taxonomy" id="273121"/>
    <lineage>
        <taxon>Bacteria</taxon>
        <taxon>Pseudomonadati</taxon>
        <taxon>Campylobacterota</taxon>
        <taxon>Epsilonproteobacteria</taxon>
        <taxon>Campylobacterales</taxon>
        <taxon>Helicobacteraceae</taxon>
        <taxon>Wolinella</taxon>
    </lineage>
</organism>
<feature type="chain" id="PRO_0000188241" description="ATP synthase epsilon chain">
    <location>
        <begin position="1"/>
        <end position="131"/>
    </location>
</feature>
<evidence type="ECO:0000255" key="1">
    <source>
        <dbReference type="HAMAP-Rule" id="MF_00530"/>
    </source>
</evidence>
<dbReference type="EMBL" id="BX571658">
    <property type="protein sequence ID" value="CAE09654.1"/>
    <property type="molecule type" value="Genomic_DNA"/>
</dbReference>
<dbReference type="SMR" id="Q7MSF4"/>
<dbReference type="STRING" id="273121.WS0517"/>
<dbReference type="KEGG" id="wsu:WS0517"/>
<dbReference type="eggNOG" id="COG0355">
    <property type="taxonomic scope" value="Bacteria"/>
</dbReference>
<dbReference type="HOGENOM" id="CLU_084338_2_1_7"/>
<dbReference type="Proteomes" id="UP000000422">
    <property type="component" value="Chromosome"/>
</dbReference>
<dbReference type="GO" id="GO:0005886">
    <property type="term" value="C:plasma membrane"/>
    <property type="evidence" value="ECO:0007669"/>
    <property type="project" value="UniProtKB-SubCell"/>
</dbReference>
<dbReference type="GO" id="GO:0045259">
    <property type="term" value="C:proton-transporting ATP synthase complex"/>
    <property type="evidence" value="ECO:0007669"/>
    <property type="project" value="UniProtKB-KW"/>
</dbReference>
<dbReference type="GO" id="GO:0005524">
    <property type="term" value="F:ATP binding"/>
    <property type="evidence" value="ECO:0007669"/>
    <property type="project" value="UniProtKB-UniRule"/>
</dbReference>
<dbReference type="GO" id="GO:0046933">
    <property type="term" value="F:proton-transporting ATP synthase activity, rotational mechanism"/>
    <property type="evidence" value="ECO:0007669"/>
    <property type="project" value="UniProtKB-UniRule"/>
</dbReference>
<dbReference type="CDD" id="cd12152">
    <property type="entry name" value="F1-ATPase_delta"/>
    <property type="match status" value="1"/>
</dbReference>
<dbReference type="Gene3D" id="2.60.15.10">
    <property type="entry name" value="F0F1 ATP synthase delta/epsilon subunit, N-terminal"/>
    <property type="match status" value="1"/>
</dbReference>
<dbReference type="HAMAP" id="MF_00530">
    <property type="entry name" value="ATP_synth_epsil_bac"/>
    <property type="match status" value="1"/>
</dbReference>
<dbReference type="InterPro" id="IPR001469">
    <property type="entry name" value="ATP_synth_F1_dsu/esu"/>
</dbReference>
<dbReference type="InterPro" id="IPR020546">
    <property type="entry name" value="ATP_synth_F1_dsu/esu_N"/>
</dbReference>
<dbReference type="InterPro" id="IPR036771">
    <property type="entry name" value="ATPsynth_dsu/esu_N"/>
</dbReference>
<dbReference type="NCBIfam" id="TIGR01216">
    <property type="entry name" value="ATP_synt_epsi"/>
    <property type="match status" value="1"/>
</dbReference>
<dbReference type="PANTHER" id="PTHR13822">
    <property type="entry name" value="ATP SYNTHASE DELTA/EPSILON CHAIN"/>
    <property type="match status" value="1"/>
</dbReference>
<dbReference type="PANTHER" id="PTHR13822:SF10">
    <property type="entry name" value="ATP SYNTHASE EPSILON CHAIN, CHLOROPLASTIC"/>
    <property type="match status" value="1"/>
</dbReference>
<dbReference type="Pfam" id="PF02823">
    <property type="entry name" value="ATP-synt_DE_N"/>
    <property type="match status" value="1"/>
</dbReference>
<dbReference type="SUPFAM" id="SSF51344">
    <property type="entry name" value="Epsilon subunit of F1F0-ATP synthase N-terminal domain"/>
    <property type="match status" value="1"/>
</dbReference>
<gene>
    <name evidence="1" type="primary">atpC</name>
    <name type="ordered locus">WS0517</name>
</gene>